<accession>B1YFM9</accession>
<organism>
    <name type="scientific">Exiguobacterium sibiricum (strain DSM 17290 / CCUG 55495 / CIP 109462 / JCM 13490 / 255-15)</name>
    <dbReference type="NCBI Taxonomy" id="262543"/>
    <lineage>
        <taxon>Bacteria</taxon>
        <taxon>Bacillati</taxon>
        <taxon>Bacillota</taxon>
        <taxon>Bacilli</taxon>
        <taxon>Bacillales</taxon>
        <taxon>Bacillales Family XII. Incertae Sedis</taxon>
        <taxon>Exiguobacterium</taxon>
    </lineage>
</organism>
<name>QUEF_EXIS2</name>
<reference key="1">
    <citation type="submission" date="2008-04" db="EMBL/GenBank/DDBJ databases">
        <title>Complete sequence of chromosome of Exiguobacterium sibiricum 255-15.</title>
        <authorList>
            <consortium name="US DOE Joint Genome Institute"/>
            <person name="Copeland A."/>
            <person name="Lucas S."/>
            <person name="Lapidus A."/>
            <person name="Glavina del Rio T."/>
            <person name="Dalin E."/>
            <person name="Tice H."/>
            <person name="Bruce D."/>
            <person name="Goodwin L."/>
            <person name="Pitluck S."/>
            <person name="Kiss H."/>
            <person name="Chertkov O."/>
            <person name="Monk C."/>
            <person name="Brettin T."/>
            <person name="Detter J.C."/>
            <person name="Han C."/>
            <person name="Kuske C.R."/>
            <person name="Schmutz J."/>
            <person name="Larimer F."/>
            <person name="Land M."/>
            <person name="Hauser L."/>
            <person name="Kyrpides N."/>
            <person name="Mikhailova N."/>
            <person name="Vishnivetskaya T."/>
            <person name="Rodrigues D.F."/>
            <person name="Gilichinsky D."/>
            <person name="Tiedje J."/>
            <person name="Richardson P."/>
        </authorList>
    </citation>
    <scope>NUCLEOTIDE SEQUENCE [LARGE SCALE GENOMIC DNA]</scope>
    <source>
        <strain>DSM 17290 / CCUG 55495 / CIP 109462 / JCM 13490 / 255-15</strain>
    </source>
</reference>
<sequence length="162" mass="19095">MRPEDLNDLSLLGQKSVPYIFEYQPEVLEAFPNRHPENDYFVKFNAPEFTSLCPITNQPDFATIYISYIPDEKLVESKSLKLYLFSFRNHGDFHENCINVIGKDLVKLMEPRYLEVWGKFTPRGGISIDPYYNYGKPGTKYEQMAEHRLFNHDLYPETIDNR</sequence>
<feature type="chain" id="PRO_1000213090" description="NADPH-dependent 7-cyano-7-deazaguanine reductase">
    <location>
        <begin position="1"/>
        <end position="162"/>
    </location>
</feature>
<feature type="active site" description="Thioimide intermediate" evidence="1">
    <location>
        <position position="53"/>
    </location>
</feature>
<feature type="active site" description="Proton donor" evidence="1">
    <location>
        <position position="60"/>
    </location>
</feature>
<feature type="binding site" evidence="1">
    <location>
        <begin position="75"/>
        <end position="77"/>
    </location>
    <ligand>
        <name>substrate</name>
    </ligand>
</feature>
<feature type="binding site" evidence="1">
    <location>
        <begin position="94"/>
        <end position="95"/>
    </location>
    <ligand>
        <name>substrate</name>
    </ligand>
</feature>
<gene>
    <name evidence="1" type="primary">queF</name>
    <name type="ordered locus">Exig_2908</name>
</gene>
<evidence type="ECO:0000255" key="1">
    <source>
        <dbReference type="HAMAP-Rule" id="MF_00818"/>
    </source>
</evidence>
<keyword id="KW-0963">Cytoplasm</keyword>
<keyword id="KW-0521">NADP</keyword>
<keyword id="KW-0560">Oxidoreductase</keyword>
<keyword id="KW-0671">Queuosine biosynthesis</keyword>
<keyword id="KW-1185">Reference proteome</keyword>
<protein>
    <recommendedName>
        <fullName evidence="1">NADPH-dependent 7-cyano-7-deazaguanine reductase</fullName>
        <ecNumber evidence="1">1.7.1.13</ecNumber>
    </recommendedName>
    <alternativeName>
        <fullName evidence="1">7-cyano-7-carbaguanine reductase</fullName>
    </alternativeName>
    <alternativeName>
        <fullName evidence="1">NADPH-dependent nitrile oxidoreductase</fullName>
    </alternativeName>
    <alternativeName>
        <fullName evidence="1">PreQ(0) reductase</fullName>
    </alternativeName>
</protein>
<dbReference type="EC" id="1.7.1.13" evidence="1"/>
<dbReference type="EMBL" id="CP001022">
    <property type="protein sequence ID" value="ACB62354.1"/>
    <property type="molecule type" value="Genomic_DNA"/>
</dbReference>
<dbReference type="RefSeq" id="WP_012371770.1">
    <property type="nucleotide sequence ID" value="NC_010556.1"/>
</dbReference>
<dbReference type="SMR" id="B1YFM9"/>
<dbReference type="STRING" id="262543.Exig_2908"/>
<dbReference type="KEGG" id="esi:Exig_2908"/>
<dbReference type="eggNOG" id="COG0780">
    <property type="taxonomic scope" value="Bacteria"/>
</dbReference>
<dbReference type="HOGENOM" id="CLU_102489_0_1_9"/>
<dbReference type="OrthoDB" id="9795077at2"/>
<dbReference type="UniPathway" id="UPA00392"/>
<dbReference type="Proteomes" id="UP000001681">
    <property type="component" value="Chromosome"/>
</dbReference>
<dbReference type="GO" id="GO:0005737">
    <property type="term" value="C:cytoplasm"/>
    <property type="evidence" value="ECO:0007669"/>
    <property type="project" value="UniProtKB-SubCell"/>
</dbReference>
<dbReference type="GO" id="GO:0033739">
    <property type="term" value="F:preQ1 synthase activity"/>
    <property type="evidence" value="ECO:0007669"/>
    <property type="project" value="UniProtKB-UniRule"/>
</dbReference>
<dbReference type="GO" id="GO:0008616">
    <property type="term" value="P:queuosine biosynthetic process"/>
    <property type="evidence" value="ECO:0007669"/>
    <property type="project" value="UniProtKB-UniRule"/>
</dbReference>
<dbReference type="GO" id="GO:0006400">
    <property type="term" value="P:tRNA modification"/>
    <property type="evidence" value="ECO:0007669"/>
    <property type="project" value="UniProtKB-UniRule"/>
</dbReference>
<dbReference type="Gene3D" id="3.30.1130.10">
    <property type="match status" value="1"/>
</dbReference>
<dbReference type="HAMAP" id="MF_00818">
    <property type="entry name" value="QueF_type1"/>
    <property type="match status" value="1"/>
</dbReference>
<dbReference type="InterPro" id="IPR043133">
    <property type="entry name" value="GTP-CH-I_C/QueF"/>
</dbReference>
<dbReference type="InterPro" id="IPR050084">
    <property type="entry name" value="NADPH_dep_7-cyano-7-deazaG_red"/>
</dbReference>
<dbReference type="InterPro" id="IPR029500">
    <property type="entry name" value="QueF"/>
</dbReference>
<dbReference type="InterPro" id="IPR016856">
    <property type="entry name" value="QueF_type1"/>
</dbReference>
<dbReference type="NCBIfam" id="TIGR03139">
    <property type="entry name" value="QueF-II"/>
    <property type="match status" value="1"/>
</dbReference>
<dbReference type="PANTHER" id="PTHR34354">
    <property type="entry name" value="NADPH-DEPENDENT 7-CYANO-7-DEAZAGUANINE REDUCTASE"/>
    <property type="match status" value="1"/>
</dbReference>
<dbReference type="PANTHER" id="PTHR34354:SF1">
    <property type="entry name" value="NADPH-DEPENDENT 7-CYANO-7-DEAZAGUANINE REDUCTASE"/>
    <property type="match status" value="1"/>
</dbReference>
<dbReference type="Pfam" id="PF14489">
    <property type="entry name" value="QueF"/>
    <property type="match status" value="1"/>
</dbReference>
<dbReference type="PIRSF" id="PIRSF027377">
    <property type="entry name" value="Nitrile_oxidored_QueF"/>
    <property type="match status" value="1"/>
</dbReference>
<dbReference type="SUPFAM" id="SSF55620">
    <property type="entry name" value="Tetrahydrobiopterin biosynthesis enzymes-like"/>
    <property type="match status" value="1"/>
</dbReference>
<comment type="function">
    <text evidence="1">Catalyzes the NADPH-dependent reduction of 7-cyano-7-deazaguanine (preQ0) to 7-aminomethyl-7-deazaguanine (preQ1).</text>
</comment>
<comment type="catalytic activity">
    <reaction evidence="1">
        <text>7-aminomethyl-7-carbaguanine + 2 NADP(+) = 7-cyano-7-deazaguanine + 2 NADPH + 3 H(+)</text>
        <dbReference type="Rhea" id="RHEA:13409"/>
        <dbReference type="ChEBI" id="CHEBI:15378"/>
        <dbReference type="ChEBI" id="CHEBI:45075"/>
        <dbReference type="ChEBI" id="CHEBI:57783"/>
        <dbReference type="ChEBI" id="CHEBI:58349"/>
        <dbReference type="ChEBI" id="CHEBI:58703"/>
        <dbReference type="EC" id="1.7.1.13"/>
    </reaction>
</comment>
<comment type="pathway">
    <text evidence="1">tRNA modification; tRNA-queuosine biosynthesis.</text>
</comment>
<comment type="subcellular location">
    <subcellularLocation>
        <location evidence="1">Cytoplasm</location>
    </subcellularLocation>
</comment>
<comment type="similarity">
    <text evidence="1">Belongs to the GTP cyclohydrolase I family. QueF type 1 subfamily.</text>
</comment>
<proteinExistence type="inferred from homology"/>